<proteinExistence type="evidence at protein level"/>
<gene>
    <name type="primary">AIF1</name>
</gene>
<dbReference type="SMR" id="P81076"/>
<dbReference type="FunCoup" id="P81076">
    <property type="interactions" value="177"/>
</dbReference>
<dbReference type="STRING" id="9823.ENSSSCP00000036374"/>
<dbReference type="iPTMnet" id="P81076"/>
<dbReference type="PaxDb" id="9823-ENSSSCP00000001497"/>
<dbReference type="PeptideAtlas" id="P81076"/>
<dbReference type="eggNOG" id="KOG0027">
    <property type="taxonomic scope" value="Eukaryota"/>
</dbReference>
<dbReference type="InParanoid" id="P81076"/>
<dbReference type="Proteomes" id="UP000008227">
    <property type="component" value="Unplaced"/>
</dbReference>
<dbReference type="Proteomes" id="UP000314985">
    <property type="component" value="Unplaced"/>
</dbReference>
<dbReference type="Proteomes" id="UP000694570">
    <property type="component" value="Unplaced"/>
</dbReference>
<dbReference type="Proteomes" id="UP000694571">
    <property type="component" value="Unplaced"/>
</dbReference>
<dbReference type="Proteomes" id="UP000694720">
    <property type="component" value="Unplaced"/>
</dbReference>
<dbReference type="Proteomes" id="UP000694722">
    <property type="component" value="Unplaced"/>
</dbReference>
<dbReference type="Proteomes" id="UP000694723">
    <property type="component" value="Unplaced"/>
</dbReference>
<dbReference type="Proteomes" id="UP000694724">
    <property type="component" value="Unplaced"/>
</dbReference>
<dbReference type="Proteomes" id="UP000694725">
    <property type="component" value="Unplaced"/>
</dbReference>
<dbReference type="Proteomes" id="UP000694726">
    <property type="component" value="Unplaced"/>
</dbReference>
<dbReference type="Proteomes" id="UP000694727">
    <property type="component" value="Unplaced"/>
</dbReference>
<dbReference type="Proteomes" id="UP000694728">
    <property type="component" value="Unplaced"/>
</dbReference>
<dbReference type="GO" id="GO:0005737">
    <property type="term" value="C:cytoplasm"/>
    <property type="evidence" value="ECO:0000250"/>
    <property type="project" value="UniProtKB"/>
</dbReference>
<dbReference type="GO" id="GO:0005856">
    <property type="term" value="C:cytoskeleton"/>
    <property type="evidence" value="ECO:0007669"/>
    <property type="project" value="UniProtKB-SubCell"/>
</dbReference>
<dbReference type="GO" id="GO:0005829">
    <property type="term" value="C:cytosol"/>
    <property type="evidence" value="ECO:0000250"/>
    <property type="project" value="UniProtKB"/>
</dbReference>
<dbReference type="GO" id="GO:0030027">
    <property type="term" value="C:lamellipodium"/>
    <property type="evidence" value="ECO:0000250"/>
    <property type="project" value="UniProtKB"/>
</dbReference>
<dbReference type="GO" id="GO:0005634">
    <property type="term" value="C:nucleus"/>
    <property type="evidence" value="ECO:0000250"/>
    <property type="project" value="UniProtKB"/>
</dbReference>
<dbReference type="GO" id="GO:0001891">
    <property type="term" value="C:phagocytic cup"/>
    <property type="evidence" value="ECO:0000250"/>
    <property type="project" value="UniProtKB"/>
</dbReference>
<dbReference type="GO" id="GO:0032587">
    <property type="term" value="C:ruffle membrane"/>
    <property type="evidence" value="ECO:0007669"/>
    <property type="project" value="UniProtKB-SubCell"/>
</dbReference>
<dbReference type="GO" id="GO:0051015">
    <property type="term" value="F:actin filament binding"/>
    <property type="evidence" value="ECO:0000250"/>
    <property type="project" value="UniProtKB"/>
</dbReference>
<dbReference type="GO" id="GO:0005509">
    <property type="term" value="F:calcium ion binding"/>
    <property type="evidence" value="ECO:0000318"/>
    <property type="project" value="GO_Central"/>
</dbReference>
<dbReference type="GO" id="GO:0051017">
    <property type="term" value="P:actin filament bundle assembly"/>
    <property type="evidence" value="ECO:0000250"/>
    <property type="project" value="UniProtKB"/>
</dbReference>
<dbReference type="GO" id="GO:0030041">
    <property type="term" value="P:actin filament polymerization"/>
    <property type="evidence" value="ECO:0000250"/>
    <property type="project" value="UniProtKB"/>
</dbReference>
<dbReference type="GO" id="GO:0071346">
    <property type="term" value="P:cellular response to type II interferon"/>
    <property type="evidence" value="ECO:0000250"/>
    <property type="project" value="UniProtKB"/>
</dbReference>
<dbReference type="GO" id="GO:0006954">
    <property type="term" value="P:inflammatory response"/>
    <property type="evidence" value="ECO:0000250"/>
    <property type="project" value="UniProtKB"/>
</dbReference>
<dbReference type="GO" id="GO:0006911">
    <property type="term" value="P:phagocytosis, engulfment"/>
    <property type="evidence" value="ECO:0000250"/>
    <property type="project" value="UniProtKB"/>
</dbReference>
<dbReference type="GO" id="GO:1900087">
    <property type="term" value="P:positive regulation of G1/S transition of mitotic cell cycle"/>
    <property type="evidence" value="ECO:0000250"/>
    <property type="project" value="UniProtKB"/>
</dbReference>
<dbReference type="GO" id="GO:0090026">
    <property type="term" value="P:positive regulation of monocyte chemotaxis"/>
    <property type="evidence" value="ECO:0000250"/>
    <property type="project" value="UniProtKB"/>
</dbReference>
<dbReference type="GO" id="GO:0071673">
    <property type="term" value="P:positive regulation of smooth muscle cell chemotaxis"/>
    <property type="evidence" value="ECO:0000250"/>
    <property type="project" value="UniProtKB"/>
</dbReference>
<dbReference type="GO" id="GO:0048661">
    <property type="term" value="P:positive regulation of smooth muscle cell proliferation"/>
    <property type="evidence" value="ECO:0000250"/>
    <property type="project" value="UniProtKB"/>
</dbReference>
<dbReference type="GO" id="GO:2000406">
    <property type="term" value="P:positive regulation of T cell migration"/>
    <property type="evidence" value="ECO:0000250"/>
    <property type="project" value="UniProtKB"/>
</dbReference>
<dbReference type="GO" id="GO:0042102">
    <property type="term" value="P:positive regulation of T cell proliferation"/>
    <property type="evidence" value="ECO:0000250"/>
    <property type="project" value="UniProtKB"/>
</dbReference>
<dbReference type="GO" id="GO:0016601">
    <property type="term" value="P:Rac protein signal transduction"/>
    <property type="evidence" value="ECO:0000250"/>
    <property type="project" value="UniProtKB"/>
</dbReference>
<dbReference type="GO" id="GO:0097178">
    <property type="term" value="P:ruffle assembly"/>
    <property type="evidence" value="ECO:0000250"/>
    <property type="project" value="UniProtKB"/>
</dbReference>
<dbReference type="FunFam" id="1.10.238.10:FF:000106">
    <property type="entry name" value="Allograft inflammatory factor 1"/>
    <property type="match status" value="1"/>
</dbReference>
<dbReference type="Gene3D" id="1.10.238.10">
    <property type="entry name" value="EF-hand"/>
    <property type="match status" value="1"/>
</dbReference>
<dbReference type="InterPro" id="IPR049025">
    <property type="entry name" value="AIF-1_EF_pair"/>
</dbReference>
<dbReference type="InterPro" id="IPR042433">
    <property type="entry name" value="AIF1/AIF1L"/>
</dbReference>
<dbReference type="InterPro" id="IPR011992">
    <property type="entry name" value="EF-hand-dom_pair"/>
</dbReference>
<dbReference type="InterPro" id="IPR002048">
    <property type="entry name" value="EF_hand_dom"/>
</dbReference>
<dbReference type="PANTHER" id="PTHR10356:SF4">
    <property type="entry name" value="ALLOGRAFT INFLAMMATORY FACTOR 1"/>
    <property type="match status" value="1"/>
</dbReference>
<dbReference type="PANTHER" id="PTHR10356">
    <property type="entry name" value="ALLOGRAFT INFLAMMATORY FACTOR-1"/>
    <property type="match status" value="1"/>
</dbReference>
<dbReference type="Pfam" id="PF21008">
    <property type="entry name" value="AIF-1"/>
    <property type="match status" value="1"/>
</dbReference>
<dbReference type="SUPFAM" id="SSF47473">
    <property type="entry name" value="EF-hand"/>
    <property type="match status" value="1"/>
</dbReference>
<dbReference type="PROSITE" id="PS50222">
    <property type="entry name" value="EF_HAND_2"/>
    <property type="match status" value="1"/>
</dbReference>
<protein>
    <recommendedName>
        <fullName>Allograft inflammatory factor 1</fullName>
        <shortName>AIF-1</shortName>
    </recommendedName>
    <alternativeName>
        <fullName>Daintain</fullName>
    </alternativeName>
</protein>
<reference key="1">
    <citation type="journal article" date="1997" name="Proc. Natl. Acad. Sci. U.S.A.">
        <title>Identification, isolation, and characterization of daintain (allograft inflammatory factor 1), a macrophage polypeptide with effects on insulin secretion and abundantly present in the pancreas of prediabetic BB rats.</title>
        <authorList>
            <person name="Chen Z.-W."/>
            <person name="Ahren B."/>
            <person name="Oestenson C.-G."/>
            <person name="Cintra A."/>
            <person name="Bergman T."/>
            <person name="Moeller C."/>
            <person name="Fuxe K."/>
            <person name="Mutt V."/>
            <person name="Joernvall H."/>
            <person name="Efendic S."/>
        </authorList>
    </citation>
    <scope>PROTEIN SEQUENCE</scope>
    <scope>ACETYLATION AT SER-1</scope>
    <source>
        <tissue>Intestine</tissue>
    </source>
</reference>
<evidence type="ECO:0000250" key="1"/>
<evidence type="ECO:0000250" key="2">
    <source>
        <dbReference type="UniProtKB" id="O70200"/>
    </source>
</evidence>
<evidence type="ECO:0000250" key="3">
    <source>
        <dbReference type="UniProtKB" id="P55008"/>
    </source>
</evidence>
<evidence type="ECO:0000255" key="4">
    <source>
        <dbReference type="PROSITE-ProRule" id="PRU00448"/>
    </source>
</evidence>
<evidence type="ECO:0000256" key="5">
    <source>
        <dbReference type="SAM" id="MobiDB-lite"/>
    </source>
</evidence>
<evidence type="ECO:0000269" key="6">
    <source>
    </source>
</evidence>
<evidence type="ECO:0000305" key="7"/>
<name>AIF1_PIG</name>
<accession>P81076</accession>
<feature type="chain" id="PRO_0000073868" description="Allograft inflammatory factor 1">
    <location>
        <begin position="1"/>
        <end position="146"/>
    </location>
</feature>
<feature type="domain" description="EF-hand 1" evidence="4">
    <location>
        <begin position="44"/>
        <end position="79"/>
    </location>
</feature>
<feature type="domain" description="EF-hand 2; degenerate" evidence="7">
    <location>
        <begin position="81"/>
        <end position="115"/>
    </location>
</feature>
<feature type="region of interest" description="Disordered" evidence="5">
    <location>
        <begin position="127"/>
        <end position="146"/>
    </location>
</feature>
<feature type="binding site" evidence="7">
    <location>
        <position position="57"/>
    </location>
    <ligand>
        <name>Ca(2+)</name>
        <dbReference type="ChEBI" id="CHEBI:29108"/>
        <label>1</label>
    </ligand>
</feature>
<feature type="binding site" evidence="7">
    <location>
        <position position="59"/>
    </location>
    <ligand>
        <name>Ca(2+)</name>
        <dbReference type="ChEBI" id="CHEBI:29108"/>
        <label>1</label>
    </ligand>
</feature>
<feature type="binding site" evidence="7">
    <location>
        <position position="61"/>
    </location>
    <ligand>
        <name>Ca(2+)</name>
        <dbReference type="ChEBI" id="CHEBI:29108"/>
        <label>1</label>
    </ligand>
</feature>
<feature type="binding site" evidence="7">
    <location>
        <position position="63"/>
    </location>
    <ligand>
        <name>Ca(2+)</name>
        <dbReference type="ChEBI" id="CHEBI:29108"/>
        <label>1</label>
    </ligand>
</feature>
<feature type="binding site" evidence="7">
    <location>
        <position position="99"/>
    </location>
    <ligand>
        <name>Ca(2+)</name>
        <dbReference type="ChEBI" id="CHEBI:29108"/>
        <label>2</label>
    </ligand>
</feature>
<feature type="modified residue" description="N-acetylserine" evidence="6">
    <location>
        <position position="1"/>
    </location>
</feature>
<feature type="modified residue" description="N6-acetyllysine" evidence="3">
    <location>
        <position position="10"/>
    </location>
</feature>
<feature type="modified residue" description="Phosphoserine" evidence="3">
    <location>
        <position position="38"/>
    </location>
</feature>
<organism>
    <name type="scientific">Sus scrofa</name>
    <name type="common">Pig</name>
    <dbReference type="NCBI Taxonomy" id="9823"/>
    <lineage>
        <taxon>Eukaryota</taxon>
        <taxon>Metazoa</taxon>
        <taxon>Chordata</taxon>
        <taxon>Craniata</taxon>
        <taxon>Vertebrata</taxon>
        <taxon>Euteleostomi</taxon>
        <taxon>Mammalia</taxon>
        <taxon>Eutheria</taxon>
        <taxon>Laurasiatheria</taxon>
        <taxon>Artiodactyla</taxon>
        <taxon>Suina</taxon>
        <taxon>Suidae</taxon>
        <taxon>Sus</taxon>
    </lineage>
</organism>
<comment type="function">
    <text evidence="1">Actin-binding protein that enhances membrane ruffling and RAC activation. Enhances the actin-bundling activity of LCP1. Binds calcium. Plays a role in RAC signaling and in phagocytosis. May play a role in macrophage activation and function. Promotes the proliferation of vascular smooth muscle cells and of T-lymphocytes. Enhances lymphocyte migration. Plays a role in vascular inflammation (By similarity). Has a dual influence on glucose-induced insulin secretion: inhibition at low concentration and stimulation at high concentrations.</text>
</comment>
<comment type="subunit">
    <text evidence="1 7">Homodimer (Potential). Monomer. Interacts with LCP1 (By similarity).</text>
</comment>
<comment type="subcellular location">
    <subcellularLocation>
        <location evidence="2">Cytoplasm</location>
        <location evidence="2">Cytoskeleton</location>
    </subcellularLocation>
    <subcellularLocation>
        <location evidence="2">Cell projection</location>
        <location evidence="2">Ruffle membrane</location>
        <topology evidence="2">Peripheral membrane protein</topology>
        <orientation evidence="2">Cytoplasmic side</orientation>
    </subcellularLocation>
    <subcellularLocation>
        <location evidence="2">Cell projection</location>
        <location evidence="2">Phagocytic cup</location>
    </subcellularLocation>
    <text evidence="2">Associated with the actin cytoskeleton at membrane ruffles and at sites of phagocytosis.</text>
</comment>
<comment type="tissue specificity">
    <text>Microglial cells in the central nervous system and dendritic cells and macrophages in several organs.</text>
</comment>
<keyword id="KW-0007">Acetylation</keyword>
<keyword id="KW-0009">Actin-binding</keyword>
<keyword id="KW-0106">Calcium</keyword>
<keyword id="KW-1003">Cell membrane</keyword>
<keyword id="KW-0966">Cell projection</keyword>
<keyword id="KW-0963">Cytoplasm</keyword>
<keyword id="KW-0206">Cytoskeleton</keyword>
<keyword id="KW-0903">Direct protein sequencing</keyword>
<keyword id="KW-0472">Membrane</keyword>
<keyword id="KW-0479">Metal-binding</keyword>
<keyword id="KW-0597">Phosphoprotein</keyword>
<keyword id="KW-1185">Reference proteome</keyword>
<keyword id="KW-0677">Repeat</keyword>
<sequence>SETIDLQGGKAFGLLKAQQEGRLNEINKQFLDDPKYSSDEDLSRKLEAFKQKYMEFDLNGNGDIDIMSLKRMLEKLGVPKTHLELKKLIKEVSSGSGETFSYSIFLKMMLGKRSAILKMILMYEEKAREQEKPTGPPAKKAISELP</sequence>